<name>GATC_KOCRD</name>
<protein>
    <recommendedName>
        <fullName evidence="1">Aspartyl/glutamyl-tRNA(Asn/Gln) amidotransferase subunit C</fullName>
        <shortName evidence="1">Asp/Glu-ADT subunit C</shortName>
        <ecNumber evidence="1">6.3.5.-</ecNumber>
    </recommendedName>
</protein>
<reference key="1">
    <citation type="journal article" date="2008" name="J. Bacteriol.">
        <title>Complete genome sequence of the soil actinomycete Kocuria rhizophila.</title>
        <authorList>
            <person name="Takarada H."/>
            <person name="Sekine M."/>
            <person name="Kosugi H."/>
            <person name="Matsuo Y."/>
            <person name="Fujisawa T."/>
            <person name="Omata S."/>
            <person name="Kishi E."/>
            <person name="Shimizu A."/>
            <person name="Tsukatani N."/>
            <person name="Tanikawa S."/>
            <person name="Fujita N."/>
            <person name="Harayama S."/>
        </authorList>
    </citation>
    <scope>NUCLEOTIDE SEQUENCE [LARGE SCALE GENOMIC DNA]</scope>
    <source>
        <strain>ATCC 9341 / DSM 348 / NBRC 103217 / DC2201</strain>
    </source>
</reference>
<feature type="chain" id="PRO_1000095290" description="Aspartyl/glutamyl-tRNA(Asn/Gln) amidotransferase subunit C">
    <location>
        <begin position="1"/>
        <end position="98"/>
    </location>
</feature>
<gene>
    <name evidence="1" type="primary">gatC</name>
    <name type="ordered locus">KRH_08120</name>
</gene>
<proteinExistence type="inferred from homology"/>
<organism>
    <name type="scientific">Kocuria rhizophila (strain ATCC 9341 / DSM 348 / NBRC 103217 / DC2201)</name>
    <dbReference type="NCBI Taxonomy" id="378753"/>
    <lineage>
        <taxon>Bacteria</taxon>
        <taxon>Bacillati</taxon>
        <taxon>Actinomycetota</taxon>
        <taxon>Actinomycetes</taxon>
        <taxon>Micrococcales</taxon>
        <taxon>Micrococcaceae</taxon>
        <taxon>Kocuria</taxon>
    </lineage>
</organism>
<evidence type="ECO:0000255" key="1">
    <source>
        <dbReference type="HAMAP-Rule" id="MF_00122"/>
    </source>
</evidence>
<comment type="function">
    <text evidence="1">Allows the formation of correctly charged Asn-tRNA(Asn) or Gln-tRNA(Gln) through the transamidation of misacylated Asp-tRNA(Asn) or Glu-tRNA(Gln) in organisms which lack either or both of asparaginyl-tRNA or glutaminyl-tRNA synthetases. The reaction takes place in the presence of glutamine and ATP through an activated phospho-Asp-tRNA(Asn) or phospho-Glu-tRNA(Gln).</text>
</comment>
<comment type="catalytic activity">
    <reaction evidence="1">
        <text>L-glutamyl-tRNA(Gln) + L-glutamine + ATP + H2O = L-glutaminyl-tRNA(Gln) + L-glutamate + ADP + phosphate + H(+)</text>
        <dbReference type="Rhea" id="RHEA:17521"/>
        <dbReference type="Rhea" id="RHEA-COMP:9681"/>
        <dbReference type="Rhea" id="RHEA-COMP:9684"/>
        <dbReference type="ChEBI" id="CHEBI:15377"/>
        <dbReference type="ChEBI" id="CHEBI:15378"/>
        <dbReference type="ChEBI" id="CHEBI:29985"/>
        <dbReference type="ChEBI" id="CHEBI:30616"/>
        <dbReference type="ChEBI" id="CHEBI:43474"/>
        <dbReference type="ChEBI" id="CHEBI:58359"/>
        <dbReference type="ChEBI" id="CHEBI:78520"/>
        <dbReference type="ChEBI" id="CHEBI:78521"/>
        <dbReference type="ChEBI" id="CHEBI:456216"/>
    </reaction>
</comment>
<comment type="catalytic activity">
    <reaction evidence="1">
        <text>L-aspartyl-tRNA(Asn) + L-glutamine + ATP + H2O = L-asparaginyl-tRNA(Asn) + L-glutamate + ADP + phosphate + 2 H(+)</text>
        <dbReference type="Rhea" id="RHEA:14513"/>
        <dbReference type="Rhea" id="RHEA-COMP:9674"/>
        <dbReference type="Rhea" id="RHEA-COMP:9677"/>
        <dbReference type="ChEBI" id="CHEBI:15377"/>
        <dbReference type="ChEBI" id="CHEBI:15378"/>
        <dbReference type="ChEBI" id="CHEBI:29985"/>
        <dbReference type="ChEBI" id="CHEBI:30616"/>
        <dbReference type="ChEBI" id="CHEBI:43474"/>
        <dbReference type="ChEBI" id="CHEBI:58359"/>
        <dbReference type="ChEBI" id="CHEBI:78515"/>
        <dbReference type="ChEBI" id="CHEBI:78516"/>
        <dbReference type="ChEBI" id="CHEBI:456216"/>
    </reaction>
</comment>
<comment type="subunit">
    <text evidence="1">Heterotrimer of A, B and C subunits.</text>
</comment>
<comment type="similarity">
    <text evidence="1">Belongs to the GatC family.</text>
</comment>
<sequence>MSAIDREQVAHLAELARIEMTDEELARVAGELELIVSSVASVSQAAGPDVPATSHPLPLQNVFREDVVGEMLTQEEALLNAPDSQDGKFRVPAILDGE</sequence>
<dbReference type="EC" id="6.3.5.-" evidence="1"/>
<dbReference type="EMBL" id="AP009152">
    <property type="protein sequence ID" value="BAG29159.1"/>
    <property type="molecule type" value="Genomic_DNA"/>
</dbReference>
<dbReference type="RefSeq" id="WP_012397880.1">
    <property type="nucleotide sequence ID" value="NZ_VECX01000001.1"/>
</dbReference>
<dbReference type="SMR" id="B2GKN0"/>
<dbReference type="STRING" id="378753.KRH_08120"/>
<dbReference type="KEGG" id="krh:KRH_08120"/>
<dbReference type="eggNOG" id="COG0721">
    <property type="taxonomic scope" value="Bacteria"/>
</dbReference>
<dbReference type="HOGENOM" id="CLU_105899_1_0_11"/>
<dbReference type="OrthoDB" id="5295223at2"/>
<dbReference type="Proteomes" id="UP000008838">
    <property type="component" value="Chromosome"/>
</dbReference>
<dbReference type="GO" id="GO:0050566">
    <property type="term" value="F:asparaginyl-tRNA synthase (glutamine-hydrolyzing) activity"/>
    <property type="evidence" value="ECO:0007669"/>
    <property type="project" value="RHEA"/>
</dbReference>
<dbReference type="GO" id="GO:0005524">
    <property type="term" value="F:ATP binding"/>
    <property type="evidence" value="ECO:0007669"/>
    <property type="project" value="UniProtKB-KW"/>
</dbReference>
<dbReference type="GO" id="GO:0050567">
    <property type="term" value="F:glutaminyl-tRNA synthase (glutamine-hydrolyzing) activity"/>
    <property type="evidence" value="ECO:0007669"/>
    <property type="project" value="UniProtKB-UniRule"/>
</dbReference>
<dbReference type="GO" id="GO:0006450">
    <property type="term" value="P:regulation of translational fidelity"/>
    <property type="evidence" value="ECO:0007669"/>
    <property type="project" value="InterPro"/>
</dbReference>
<dbReference type="GO" id="GO:0006412">
    <property type="term" value="P:translation"/>
    <property type="evidence" value="ECO:0007669"/>
    <property type="project" value="UniProtKB-UniRule"/>
</dbReference>
<dbReference type="Gene3D" id="1.10.20.60">
    <property type="entry name" value="Glu-tRNAGln amidotransferase C subunit, N-terminal domain"/>
    <property type="match status" value="1"/>
</dbReference>
<dbReference type="HAMAP" id="MF_00122">
    <property type="entry name" value="GatC"/>
    <property type="match status" value="1"/>
</dbReference>
<dbReference type="InterPro" id="IPR036113">
    <property type="entry name" value="Asp/Glu-ADT_sf_sub_c"/>
</dbReference>
<dbReference type="InterPro" id="IPR003837">
    <property type="entry name" value="GatC"/>
</dbReference>
<dbReference type="NCBIfam" id="TIGR00135">
    <property type="entry name" value="gatC"/>
    <property type="match status" value="1"/>
</dbReference>
<dbReference type="Pfam" id="PF02686">
    <property type="entry name" value="GatC"/>
    <property type="match status" value="1"/>
</dbReference>
<dbReference type="SUPFAM" id="SSF141000">
    <property type="entry name" value="Glu-tRNAGln amidotransferase C subunit"/>
    <property type="match status" value="1"/>
</dbReference>
<keyword id="KW-0067">ATP-binding</keyword>
<keyword id="KW-0436">Ligase</keyword>
<keyword id="KW-0547">Nucleotide-binding</keyword>
<keyword id="KW-0648">Protein biosynthesis</keyword>
<keyword id="KW-1185">Reference proteome</keyword>
<accession>B2GKN0</accession>